<organism>
    <name type="scientific">Cutibacterium acnes (strain DSM 16379 / KPA171202)</name>
    <name type="common">Propionibacterium acnes</name>
    <dbReference type="NCBI Taxonomy" id="267747"/>
    <lineage>
        <taxon>Bacteria</taxon>
        <taxon>Bacillati</taxon>
        <taxon>Actinomycetota</taxon>
        <taxon>Actinomycetes</taxon>
        <taxon>Propionibacteriales</taxon>
        <taxon>Propionibacteriaceae</taxon>
        <taxon>Cutibacterium</taxon>
    </lineage>
</organism>
<keyword id="KW-0521">NADP</keyword>
<keyword id="KW-0560">Oxidoreductase</keyword>
<keyword id="KW-0627">Porphyrin biosynthesis</keyword>
<comment type="function">
    <text evidence="1">Catalyzes the NADPH-dependent reduction of glutamyl-tRNA(Glu) to glutamate 1-semialdehyde (GSA).</text>
</comment>
<comment type="catalytic activity">
    <reaction evidence="1">
        <text>(S)-4-amino-5-oxopentanoate + tRNA(Glu) + NADP(+) = L-glutamyl-tRNA(Glu) + NADPH + H(+)</text>
        <dbReference type="Rhea" id="RHEA:12344"/>
        <dbReference type="Rhea" id="RHEA-COMP:9663"/>
        <dbReference type="Rhea" id="RHEA-COMP:9680"/>
        <dbReference type="ChEBI" id="CHEBI:15378"/>
        <dbReference type="ChEBI" id="CHEBI:57501"/>
        <dbReference type="ChEBI" id="CHEBI:57783"/>
        <dbReference type="ChEBI" id="CHEBI:58349"/>
        <dbReference type="ChEBI" id="CHEBI:78442"/>
        <dbReference type="ChEBI" id="CHEBI:78520"/>
        <dbReference type="EC" id="1.2.1.70"/>
    </reaction>
</comment>
<comment type="pathway">
    <text evidence="1">Porphyrin-containing compound metabolism; protoporphyrin-IX biosynthesis; 5-aminolevulinate from L-glutamyl-tRNA(Glu): step 1/2.</text>
</comment>
<comment type="subunit">
    <text evidence="1">Homodimer.</text>
</comment>
<comment type="domain">
    <text evidence="1">Possesses an unusual extended V-shaped dimeric structure with each monomer consisting of three distinct domains arranged along a curved 'spinal' alpha-helix. The N-terminal catalytic domain specifically recognizes the glutamate moiety of the substrate. The second domain is the NADPH-binding domain, and the third C-terminal domain is responsible for dimerization.</text>
</comment>
<comment type="miscellaneous">
    <text evidence="1">During catalysis, the active site Cys acts as a nucleophile attacking the alpha-carbonyl group of tRNA-bound glutamate with the formation of a thioester intermediate between enzyme and glutamate, and the concomitant release of tRNA(Glu). The thioester intermediate is finally reduced by direct hydride transfer from NADPH, to form the product GSA.</text>
</comment>
<comment type="similarity">
    <text evidence="1">Belongs to the glutamyl-tRNA reductase family.</text>
</comment>
<dbReference type="EC" id="1.2.1.70" evidence="1"/>
<dbReference type="EMBL" id="AE017283">
    <property type="protein sequence ID" value="AAT82064.1"/>
    <property type="molecule type" value="Genomic_DNA"/>
</dbReference>
<dbReference type="RefSeq" id="WP_002531195.1">
    <property type="nucleotide sequence ID" value="NZ_CP025935.1"/>
</dbReference>
<dbReference type="SMR" id="Q6AB02"/>
<dbReference type="EnsemblBacteria" id="AAT82064">
    <property type="protein sequence ID" value="AAT82064"/>
    <property type="gene ID" value="PPA0307"/>
</dbReference>
<dbReference type="KEGG" id="pac:PPA0307"/>
<dbReference type="PATRIC" id="fig|267747.3.peg.318"/>
<dbReference type="eggNOG" id="COG0373">
    <property type="taxonomic scope" value="Bacteria"/>
</dbReference>
<dbReference type="HOGENOM" id="CLU_035113_4_1_11"/>
<dbReference type="UniPathway" id="UPA00251">
    <property type="reaction ID" value="UER00316"/>
</dbReference>
<dbReference type="Proteomes" id="UP000000603">
    <property type="component" value="Chromosome"/>
</dbReference>
<dbReference type="GO" id="GO:0008883">
    <property type="term" value="F:glutamyl-tRNA reductase activity"/>
    <property type="evidence" value="ECO:0007669"/>
    <property type="project" value="UniProtKB-UniRule"/>
</dbReference>
<dbReference type="GO" id="GO:0050661">
    <property type="term" value="F:NADP binding"/>
    <property type="evidence" value="ECO:0007669"/>
    <property type="project" value="InterPro"/>
</dbReference>
<dbReference type="GO" id="GO:0019353">
    <property type="term" value="P:protoporphyrinogen IX biosynthetic process from glutamate"/>
    <property type="evidence" value="ECO:0007669"/>
    <property type="project" value="TreeGrafter"/>
</dbReference>
<dbReference type="Gene3D" id="3.30.460.30">
    <property type="entry name" value="Glutamyl-tRNA reductase, N-terminal domain"/>
    <property type="match status" value="1"/>
</dbReference>
<dbReference type="Gene3D" id="3.40.50.720">
    <property type="entry name" value="NAD(P)-binding Rossmann-like Domain"/>
    <property type="match status" value="1"/>
</dbReference>
<dbReference type="HAMAP" id="MF_00087">
    <property type="entry name" value="Glu_tRNA_reductase"/>
    <property type="match status" value="1"/>
</dbReference>
<dbReference type="InterPro" id="IPR000343">
    <property type="entry name" value="4pyrrol_synth_GluRdtase"/>
</dbReference>
<dbReference type="InterPro" id="IPR015896">
    <property type="entry name" value="4pyrrol_synth_GluRdtase_dimer"/>
</dbReference>
<dbReference type="InterPro" id="IPR015895">
    <property type="entry name" value="4pyrrol_synth_GluRdtase_N"/>
</dbReference>
<dbReference type="InterPro" id="IPR036453">
    <property type="entry name" value="GluRdtase_dimer_dom_sf"/>
</dbReference>
<dbReference type="InterPro" id="IPR036343">
    <property type="entry name" value="GluRdtase_N_sf"/>
</dbReference>
<dbReference type="InterPro" id="IPR036291">
    <property type="entry name" value="NAD(P)-bd_dom_sf"/>
</dbReference>
<dbReference type="InterPro" id="IPR006151">
    <property type="entry name" value="Shikm_DH/Glu-tRNA_Rdtase"/>
</dbReference>
<dbReference type="PANTHER" id="PTHR43013">
    <property type="entry name" value="GLUTAMYL-TRNA REDUCTASE"/>
    <property type="match status" value="1"/>
</dbReference>
<dbReference type="PANTHER" id="PTHR43013:SF1">
    <property type="entry name" value="GLUTAMYL-TRNA REDUCTASE"/>
    <property type="match status" value="1"/>
</dbReference>
<dbReference type="Pfam" id="PF00745">
    <property type="entry name" value="GlutR_dimer"/>
    <property type="match status" value="1"/>
</dbReference>
<dbReference type="Pfam" id="PF05201">
    <property type="entry name" value="GlutR_N"/>
    <property type="match status" value="1"/>
</dbReference>
<dbReference type="Pfam" id="PF01488">
    <property type="entry name" value="Shikimate_DH"/>
    <property type="match status" value="1"/>
</dbReference>
<dbReference type="PIRSF" id="PIRSF000445">
    <property type="entry name" value="4pyrrol_synth_GluRdtase"/>
    <property type="match status" value="1"/>
</dbReference>
<dbReference type="SUPFAM" id="SSF69742">
    <property type="entry name" value="Glutamyl tRNA-reductase catalytic, N-terminal domain"/>
    <property type="match status" value="1"/>
</dbReference>
<dbReference type="SUPFAM" id="SSF69075">
    <property type="entry name" value="Glutamyl tRNA-reductase dimerization domain"/>
    <property type="match status" value="1"/>
</dbReference>
<dbReference type="SUPFAM" id="SSF51735">
    <property type="entry name" value="NAD(P)-binding Rossmann-fold domains"/>
    <property type="match status" value="1"/>
</dbReference>
<feature type="chain" id="PRO_0000335059" description="Glutamyl-tRNA reductase">
    <location>
        <begin position="1"/>
        <end position="444"/>
    </location>
</feature>
<feature type="active site" description="Nucleophile" evidence="1">
    <location>
        <position position="42"/>
    </location>
</feature>
<feature type="binding site" evidence="1">
    <location>
        <begin position="41"/>
        <end position="44"/>
    </location>
    <ligand>
        <name>substrate</name>
    </ligand>
</feature>
<feature type="binding site" evidence="1">
    <location>
        <position position="102"/>
    </location>
    <ligand>
        <name>substrate</name>
    </ligand>
</feature>
<feature type="binding site" evidence="1">
    <location>
        <begin position="107"/>
        <end position="109"/>
    </location>
    <ligand>
        <name>substrate</name>
    </ligand>
</feature>
<feature type="binding site" evidence="1">
    <location>
        <position position="113"/>
    </location>
    <ligand>
        <name>substrate</name>
    </ligand>
</feature>
<feature type="binding site" evidence="1">
    <location>
        <begin position="181"/>
        <end position="186"/>
    </location>
    <ligand>
        <name>NADP(+)</name>
        <dbReference type="ChEBI" id="CHEBI:58349"/>
    </ligand>
</feature>
<sequence>MTVDHAEQGLGVVSEAAAQVDGLGLALTDHPQIRGALVLSTCNRVCLIVETSPEAVAQGFDEAALRRCIADHGANVLAESAQLVCENDAVWRLFRVAAGMESMVFGEREVAGQMKRALSEARREQTVSYTIGHVVEEALKTSRHVATETALAAEGRTVVAVGLDLVAQRMDLDGARVLVMGTGSYAGASCAQLSSRGVAEIQVHSASGRAAGFARRHRVSEALDIDAALAQADLVVTCRGSGVPALSAEAARRAVDARRGRDLMVLDLAISGDVEEPVPAGVEVIDLETIRQAVPASAEAERAAAEHIIATGVRHFAVDLERRRMAPAVVALRDVISDLVTAELERLPEEGSVPVDEVAASLRRLAASMAHIPSARARMASEQGLGDRWLNSLSDVLGIDVDIAAPVIDMSSFANADCMTCPVTGLRVEDLATDAAPRGEERTS</sequence>
<protein>
    <recommendedName>
        <fullName evidence="1">Glutamyl-tRNA reductase</fullName>
        <shortName evidence="1">GluTR</shortName>
        <ecNumber evidence="1">1.2.1.70</ecNumber>
    </recommendedName>
</protein>
<reference key="1">
    <citation type="journal article" date="2004" name="Science">
        <title>The complete genome sequence of Propionibacterium acnes, a commensal of human skin.</title>
        <authorList>
            <person name="Brueggemann H."/>
            <person name="Henne A."/>
            <person name="Hoster F."/>
            <person name="Liesegang H."/>
            <person name="Wiezer A."/>
            <person name="Strittmatter A."/>
            <person name="Hujer S."/>
            <person name="Duerre P."/>
            <person name="Gottschalk G."/>
        </authorList>
    </citation>
    <scope>NUCLEOTIDE SEQUENCE [LARGE SCALE GENOMIC DNA]</scope>
    <source>
        <strain>DSM 16379 / KPA171202</strain>
    </source>
</reference>
<gene>
    <name evidence="1" type="primary">hemA</name>
    <name type="ordered locus">PPA0307</name>
</gene>
<accession>Q6AB02</accession>
<evidence type="ECO:0000255" key="1">
    <source>
        <dbReference type="HAMAP-Rule" id="MF_00087"/>
    </source>
</evidence>
<proteinExistence type="inferred from homology"/>
<name>HEM1_CUTAK</name>